<organism>
    <name type="scientific">Bordetella pertussis (strain Tohama I / ATCC BAA-589 / NCTC 13251)</name>
    <dbReference type="NCBI Taxonomy" id="257313"/>
    <lineage>
        <taxon>Bacteria</taxon>
        <taxon>Pseudomonadati</taxon>
        <taxon>Pseudomonadota</taxon>
        <taxon>Betaproteobacteria</taxon>
        <taxon>Burkholderiales</taxon>
        <taxon>Alcaligenaceae</taxon>
        <taxon>Bordetella</taxon>
    </lineage>
</organism>
<keyword id="KW-0131">Cell cycle</keyword>
<keyword id="KW-0132">Cell division</keyword>
<keyword id="KW-0342">GTP-binding</keyword>
<keyword id="KW-0460">Magnesium</keyword>
<keyword id="KW-0479">Metal-binding</keyword>
<keyword id="KW-0547">Nucleotide-binding</keyword>
<keyword id="KW-1185">Reference proteome</keyword>
<keyword id="KW-0717">Septation</keyword>
<dbReference type="EMBL" id="BX640422">
    <property type="protein sequence ID" value="CAE43906.1"/>
    <property type="molecule type" value="Genomic_DNA"/>
</dbReference>
<dbReference type="RefSeq" id="NP_882157.1">
    <property type="nucleotide sequence ID" value="NC_002929.2"/>
</dbReference>
<dbReference type="SMR" id="Q7VTA1"/>
<dbReference type="STRING" id="257313.BP3649"/>
<dbReference type="PaxDb" id="257313-BP3649"/>
<dbReference type="KEGG" id="bpe:BP3649"/>
<dbReference type="PATRIC" id="fig|257313.5.peg.3946"/>
<dbReference type="eggNOG" id="COG0218">
    <property type="taxonomic scope" value="Bacteria"/>
</dbReference>
<dbReference type="HOGENOM" id="CLU_033732_1_1_4"/>
<dbReference type="Proteomes" id="UP000002676">
    <property type="component" value="Chromosome"/>
</dbReference>
<dbReference type="GO" id="GO:0005829">
    <property type="term" value="C:cytosol"/>
    <property type="evidence" value="ECO:0007669"/>
    <property type="project" value="TreeGrafter"/>
</dbReference>
<dbReference type="GO" id="GO:0005525">
    <property type="term" value="F:GTP binding"/>
    <property type="evidence" value="ECO:0007669"/>
    <property type="project" value="UniProtKB-UniRule"/>
</dbReference>
<dbReference type="GO" id="GO:0046872">
    <property type="term" value="F:metal ion binding"/>
    <property type="evidence" value="ECO:0007669"/>
    <property type="project" value="UniProtKB-KW"/>
</dbReference>
<dbReference type="GO" id="GO:0000917">
    <property type="term" value="P:division septum assembly"/>
    <property type="evidence" value="ECO:0007669"/>
    <property type="project" value="UniProtKB-KW"/>
</dbReference>
<dbReference type="CDD" id="cd01876">
    <property type="entry name" value="YihA_EngB"/>
    <property type="match status" value="1"/>
</dbReference>
<dbReference type="Gene3D" id="3.40.50.300">
    <property type="entry name" value="P-loop containing nucleotide triphosphate hydrolases"/>
    <property type="match status" value="1"/>
</dbReference>
<dbReference type="HAMAP" id="MF_00321">
    <property type="entry name" value="GTPase_EngB"/>
    <property type="match status" value="1"/>
</dbReference>
<dbReference type="InterPro" id="IPR030393">
    <property type="entry name" value="G_ENGB_dom"/>
</dbReference>
<dbReference type="InterPro" id="IPR006073">
    <property type="entry name" value="GTP-bd"/>
</dbReference>
<dbReference type="InterPro" id="IPR019987">
    <property type="entry name" value="GTP-bd_ribosome_bio_YsxC"/>
</dbReference>
<dbReference type="InterPro" id="IPR027417">
    <property type="entry name" value="P-loop_NTPase"/>
</dbReference>
<dbReference type="NCBIfam" id="TIGR03598">
    <property type="entry name" value="GTPase_YsxC"/>
    <property type="match status" value="1"/>
</dbReference>
<dbReference type="PANTHER" id="PTHR11649:SF13">
    <property type="entry name" value="ENGB-TYPE G DOMAIN-CONTAINING PROTEIN"/>
    <property type="match status" value="1"/>
</dbReference>
<dbReference type="PANTHER" id="PTHR11649">
    <property type="entry name" value="MSS1/TRME-RELATED GTP-BINDING PROTEIN"/>
    <property type="match status" value="1"/>
</dbReference>
<dbReference type="Pfam" id="PF01926">
    <property type="entry name" value="MMR_HSR1"/>
    <property type="match status" value="1"/>
</dbReference>
<dbReference type="SUPFAM" id="SSF52540">
    <property type="entry name" value="P-loop containing nucleoside triphosphate hydrolases"/>
    <property type="match status" value="1"/>
</dbReference>
<dbReference type="PROSITE" id="PS51706">
    <property type="entry name" value="G_ENGB"/>
    <property type="match status" value="1"/>
</dbReference>
<name>ENGB_BORPE</name>
<sequence>MSLLHRASFYISAARLDQLPPAGAPEVCFVGRSNAGKSSAINVLCNQRRLAFSSKTPGRTRLINMFGLPDPLAPGEQLGFLVDLPGYGYASVAHREKEKWADILGGYLRDRASLAGIVLLIDIRRGVTDLDRRLTNFIAPTGRPVLALLTKADKLPYGQRMRTVFAVRKDLADIGALHMVPFSSTERIGLEEAGAHIENWISPKVVP</sequence>
<reference key="1">
    <citation type="journal article" date="2003" name="Nat. Genet.">
        <title>Comparative analysis of the genome sequences of Bordetella pertussis, Bordetella parapertussis and Bordetella bronchiseptica.</title>
        <authorList>
            <person name="Parkhill J."/>
            <person name="Sebaihia M."/>
            <person name="Preston A."/>
            <person name="Murphy L.D."/>
            <person name="Thomson N.R."/>
            <person name="Harris D.E."/>
            <person name="Holden M.T.G."/>
            <person name="Churcher C.M."/>
            <person name="Bentley S.D."/>
            <person name="Mungall K.L."/>
            <person name="Cerdeno-Tarraga A.-M."/>
            <person name="Temple L."/>
            <person name="James K.D."/>
            <person name="Harris B."/>
            <person name="Quail M.A."/>
            <person name="Achtman M."/>
            <person name="Atkin R."/>
            <person name="Baker S."/>
            <person name="Basham D."/>
            <person name="Bason N."/>
            <person name="Cherevach I."/>
            <person name="Chillingworth T."/>
            <person name="Collins M."/>
            <person name="Cronin A."/>
            <person name="Davis P."/>
            <person name="Doggett J."/>
            <person name="Feltwell T."/>
            <person name="Goble A."/>
            <person name="Hamlin N."/>
            <person name="Hauser H."/>
            <person name="Holroyd S."/>
            <person name="Jagels K."/>
            <person name="Leather S."/>
            <person name="Moule S."/>
            <person name="Norberczak H."/>
            <person name="O'Neil S."/>
            <person name="Ormond D."/>
            <person name="Price C."/>
            <person name="Rabbinowitsch E."/>
            <person name="Rutter S."/>
            <person name="Sanders M."/>
            <person name="Saunders D."/>
            <person name="Seeger K."/>
            <person name="Sharp S."/>
            <person name="Simmonds M."/>
            <person name="Skelton J."/>
            <person name="Squares R."/>
            <person name="Squares S."/>
            <person name="Stevens K."/>
            <person name="Unwin L."/>
            <person name="Whitehead S."/>
            <person name="Barrell B.G."/>
            <person name="Maskell D.J."/>
        </authorList>
    </citation>
    <scope>NUCLEOTIDE SEQUENCE [LARGE SCALE GENOMIC DNA]</scope>
    <source>
        <strain>Tohama I / ATCC BAA-589 / NCTC 13251</strain>
    </source>
</reference>
<feature type="chain" id="PRO_0000266828" description="Probable GTP-binding protein EngB">
    <location>
        <begin position="1"/>
        <end position="207"/>
    </location>
</feature>
<feature type="domain" description="EngB-type G" evidence="1">
    <location>
        <begin position="23"/>
        <end position="203"/>
    </location>
</feature>
<feature type="binding site" evidence="1">
    <location>
        <begin position="31"/>
        <end position="38"/>
    </location>
    <ligand>
        <name>GTP</name>
        <dbReference type="ChEBI" id="CHEBI:37565"/>
    </ligand>
</feature>
<feature type="binding site" evidence="1">
    <location>
        <position position="38"/>
    </location>
    <ligand>
        <name>Mg(2+)</name>
        <dbReference type="ChEBI" id="CHEBI:18420"/>
    </ligand>
</feature>
<feature type="binding site" evidence="1">
    <location>
        <begin position="58"/>
        <end position="62"/>
    </location>
    <ligand>
        <name>GTP</name>
        <dbReference type="ChEBI" id="CHEBI:37565"/>
    </ligand>
</feature>
<feature type="binding site" evidence="1">
    <location>
        <position position="60"/>
    </location>
    <ligand>
        <name>Mg(2+)</name>
        <dbReference type="ChEBI" id="CHEBI:18420"/>
    </ligand>
</feature>
<feature type="binding site" evidence="1">
    <location>
        <begin position="83"/>
        <end position="86"/>
    </location>
    <ligand>
        <name>GTP</name>
        <dbReference type="ChEBI" id="CHEBI:37565"/>
    </ligand>
</feature>
<feature type="binding site" evidence="1">
    <location>
        <begin position="150"/>
        <end position="153"/>
    </location>
    <ligand>
        <name>GTP</name>
        <dbReference type="ChEBI" id="CHEBI:37565"/>
    </ligand>
</feature>
<feature type="binding site" evidence="1">
    <location>
        <begin position="182"/>
        <end position="184"/>
    </location>
    <ligand>
        <name>GTP</name>
        <dbReference type="ChEBI" id="CHEBI:37565"/>
    </ligand>
</feature>
<evidence type="ECO:0000255" key="1">
    <source>
        <dbReference type="HAMAP-Rule" id="MF_00321"/>
    </source>
</evidence>
<comment type="function">
    <text evidence="1">Necessary for normal cell division and for the maintenance of normal septation.</text>
</comment>
<comment type="cofactor">
    <cofactor evidence="1">
        <name>Mg(2+)</name>
        <dbReference type="ChEBI" id="CHEBI:18420"/>
    </cofactor>
</comment>
<comment type="similarity">
    <text evidence="1">Belongs to the TRAFAC class TrmE-Era-EngA-EngB-Septin-like GTPase superfamily. EngB GTPase family.</text>
</comment>
<gene>
    <name evidence="1" type="primary">engB</name>
    <name type="ordered locus">BP3649</name>
</gene>
<proteinExistence type="inferred from homology"/>
<accession>Q7VTA1</accession>
<protein>
    <recommendedName>
        <fullName evidence="1">Probable GTP-binding protein EngB</fullName>
    </recommendedName>
</protein>